<accession>B4T9Z1</accession>
<organism>
    <name type="scientific">Salmonella heidelberg (strain SL476)</name>
    <dbReference type="NCBI Taxonomy" id="454169"/>
    <lineage>
        <taxon>Bacteria</taxon>
        <taxon>Pseudomonadati</taxon>
        <taxon>Pseudomonadota</taxon>
        <taxon>Gammaproteobacteria</taxon>
        <taxon>Enterobacterales</taxon>
        <taxon>Enterobacteriaceae</taxon>
        <taxon>Salmonella</taxon>
    </lineage>
</organism>
<gene>
    <name evidence="1" type="primary">ligB</name>
    <name type="ordered locus">SeHA_C4065</name>
</gene>
<sequence length="561" mass="62907">MRLWKSMAWGILLWHSQSGALCPAWPPARAAEEIARLQQQLADWNDIYWKQGVSAVDDSVYDQLSARLVQWQRCVGQDVSSTPVSPPLNGTTMHPVAHTGVRKLADRQAVEQWMRGRSELWVQPKVDGVAVTLLYQNGKLARAISRGNGLQGEDWTPKIRLIPSIPQSTQGALANAVLQGEIFLQREGHIQQRMGGMNARSKVAGMLMRQDNASALNSLGIFIWAWPDGPANMPERLSQLAKAGFSLTKKYSLVVKDASEVERARQSWLTSALPFVTDGVVIRMAKEPASQYWRPGQGDWLAAWKYPPVAQVAQVSAIQFSVGKSGKITVVASLVPVILDDKRVQRVNIGSVKRWEAWDIAPGDQILVSLAGQGIPRLDEVVWRSRERSKPVPPDSHFNSLTCFYASETCQEQFISRLVWLGSRSALGLDGMGEASWRALHQTHRFEHIFSWLALTSAQIANTPGFAKGKSEQIWRQFNLARRQPFTRWIMAMDIPLTQAALQASGDRSWEQLLMRTEQHWRQLPATGERRAGRVIDWRDNPQIKTLSRWLAAQHIPGFGS</sequence>
<feature type="chain" id="PRO_1000147730" description="DNA ligase B">
    <location>
        <begin position="1"/>
        <end position="561"/>
    </location>
</feature>
<feature type="active site" description="N6-AMP-lysine intermediate" evidence="1">
    <location>
        <position position="125"/>
    </location>
</feature>
<evidence type="ECO:0000255" key="1">
    <source>
        <dbReference type="HAMAP-Rule" id="MF_01587"/>
    </source>
</evidence>
<dbReference type="EC" id="6.5.1.2" evidence="1"/>
<dbReference type="EMBL" id="CP001120">
    <property type="protein sequence ID" value="ACF67593.1"/>
    <property type="molecule type" value="Genomic_DNA"/>
</dbReference>
<dbReference type="RefSeq" id="WP_001241823.1">
    <property type="nucleotide sequence ID" value="NC_011083.1"/>
</dbReference>
<dbReference type="SMR" id="B4T9Z1"/>
<dbReference type="KEGG" id="seh:SeHA_C4065"/>
<dbReference type="HOGENOM" id="CLU_489786_0_0_6"/>
<dbReference type="Proteomes" id="UP000001866">
    <property type="component" value="Chromosome"/>
</dbReference>
<dbReference type="GO" id="GO:0003911">
    <property type="term" value="F:DNA ligase (NAD+) activity"/>
    <property type="evidence" value="ECO:0007669"/>
    <property type="project" value="UniProtKB-UniRule"/>
</dbReference>
<dbReference type="GO" id="GO:0006281">
    <property type="term" value="P:DNA repair"/>
    <property type="evidence" value="ECO:0007669"/>
    <property type="project" value="UniProtKB-KW"/>
</dbReference>
<dbReference type="GO" id="GO:0006260">
    <property type="term" value="P:DNA replication"/>
    <property type="evidence" value="ECO:0007669"/>
    <property type="project" value="UniProtKB-KW"/>
</dbReference>
<dbReference type="FunFam" id="1.10.287.610:FF:000003">
    <property type="entry name" value="DNA ligase B"/>
    <property type="match status" value="1"/>
</dbReference>
<dbReference type="FunFam" id="2.40.50.140:FF:000139">
    <property type="entry name" value="DNA ligase B"/>
    <property type="match status" value="1"/>
</dbReference>
<dbReference type="FunFam" id="3.30.470.30:FF:000007">
    <property type="entry name" value="DNA ligase B"/>
    <property type="match status" value="1"/>
</dbReference>
<dbReference type="Gene3D" id="1.10.150.20">
    <property type="entry name" value="5' to 3' exonuclease, C-terminal subdomain"/>
    <property type="match status" value="1"/>
</dbReference>
<dbReference type="Gene3D" id="3.30.470.30">
    <property type="entry name" value="DNA ligase/mRNA capping enzyme"/>
    <property type="match status" value="1"/>
</dbReference>
<dbReference type="Gene3D" id="1.10.287.610">
    <property type="entry name" value="Helix hairpin bin"/>
    <property type="match status" value="1"/>
</dbReference>
<dbReference type="Gene3D" id="2.40.50.140">
    <property type="entry name" value="Nucleic acid-binding proteins"/>
    <property type="match status" value="1"/>
</dbReference>
<dbReference type="HAMAP" id="MF_01587">
    <property type="entry name" value="DNA_ligase_B"/>
    <property type="match status" value="1"/>
</dbReference>
<dbReference type="InterPro" id="IPR018239">
    <property type="entry name" value="DNA_ligase_AS"/>
</dbReference>
<dbReference type="InterPro" id="IPR020923">
    <property type="entry name" value="DNA_ligase_B"/>
</dbReference>
<dbReference type="InterPro" id="IPR033136">
    <property type="entry name" value="DNA_ligase_CS"/>
</dbReference>
<dbReference type="InterPro" id="IPR013839">
    <property type="entry name" value="DNAligase_adenylation"/>
</dbReference>
<dbReference type="InterPro" id="IPR013840">
    <property type="entry name" value="DNAligase_N"/>
</dbReference>
<dbReference type="InterPro" id="IPR012340">
    <property type="entry name" value="NA-bd_OB-fold"/>
</dbReference>
<dbReference type="InterPro" id="IPR050326">
    <property type="entry name" value="NAD_dep_DNA_ligaseB"/>
</dbReference>
<dbReference type="InterPro" id="IPR004150">
    <property type="entry name" value="NAD_DNA_ligase_OB"/>
</dbReference>
<dbReference type="InterPro" id="IPR010994">
    <property type="entry name" value="RuvA_2-like"/>
</dbReference>
<dbReference type="NCBIfam" id="NF005987">
    <property type="entry name" value="PRK08097.1"/>
    <property type="match status" value="1"/>
</dbReference>
<dbReference type="PANTHER" id="PTHR47810">
    <property type="entry name" value="DNA LIGASE"/>
    <property type="match status" value="1"/>
</dbReference>
<dbReference type="PANTHER" id="PTHR47810:SF1">
    <property type="entry name" value="DNA LIGASE B"/>
    <property type="match status" value="1"/>
</dbReference>
<dbReference type="Pfam" id="PF01653">
    <property type="entry name" value="DNA_ligase_aden"/>
    <property type="match status" value="1"/>
</dbReference>
<dbReference type="Pfam" id="PF03120">
    <property type="entry name" value="DNA_ligase_OB"/>
    <property type="match status" value="1"/>
</dbReference>
<dbReference type="SMART" id="SM00532">
    <property type="entry name" value="LIGANc"/>
    <property type="match status" value="1"/>
</dbReference>
<dbReference type="SUPFAM" id="SSF56091">
    <property type="entry name" value="DNA ligase/mRNA capping enzyme, catalytic domain"/>
    <property type="match status" value="1"/>
</dbReference>
<dbReference type="SUPFAM" id="SSF50249">
    <property type="entry name" value="Nucleic acid-binding proteins"/>
    <property type="match status" value="1"/>
</dbReference>
<dbReference type="SUPFAM" id="SSF47781">
    <property type="entry name" value="RuvA domain 2-like"/>
    <property type="match status" value="1"/>
</dbReference>
<dbReference type="PROSITE" id="PS01055">
    <property type="entry name" value="DNA_LIGASE_N1"/>
    <property type="match status" value="1"/>
</dbReference>
<dbReference type="PROSITE" id="PS01056">
    <property type="entry name" value="DNA_LIGASE_N2"/>
    <property type="match status" value="1"/>
</dbReference>
<protein>
    <recommendedName>
        <fullName evidence="1">DNA ligase B</fullName>
        <ecNumber evidence="1">6.5.1.2</ecNumber>
    </recommendedName>
    <alternativeName>
        <fullName evidence="1">Polydeoxyribonucleotide synthase [NAD(+)] B</fullName>
    </alternativeName>
</protein>
<reference key="1">
    <citation type="journal article" date="2011" name="J. Bacteriol.">
        <title>Comparative genomics of 28 Salmonella enterica isolates: evidence for CRISPR-mediated adaptive sublineage evolution.</title>
        <authorList>
            <person name="Fricke W.F."/>
            <person name="Mammel M.K."/>
            <person name="McDermott P.F."/>
            <person name="Tartera C."/>
            <person name="White D.G."/>
            <person name="Leclerc J.E."/>
            <person name="Ravel J."/>
            <person name="Cebula T.A."/>
        </authorList>
    </citation>
    <scope>NUCLEOTIDE SEQUENCE [LARGE SCALE GENOMIC DNA]</scope>
    <source>
        <strain>SL476</strain>
    </source>
</reference>
<proteinExistence type="inferred from homology"/>
<comment type="function">
    <text evidence="1">Catalyzes the formation of phosphodiester linkages between 5'-phosphoryl and 3'-hydroxyl groups in double-stranded DNA using NAD as a coenzyme and as the energy source for the reaction.</text>
</comment>
<comment type="catalytic activity">
    <reaction evidence="1">
        <text>NAD(+) + (deoxyribonucleotide)n-3'-hydroxyl + 5'-phospho-(deoxyribonucleotide)m = (deoxyribonucleotide)n+m + AMP + beta-nicotinamide D-nucleotide.</text>
        <dbReference type="EC" id="6.5.1.2"/>
    </reaction>
</comment>
<comment type="similarity">
    <text evidence="1">Belongs to the NAD-dependent DNA ligase family. LigB subfamily.</text>
</comment>
<name>LIGB_SALHS</name>
<keyword id="KW-0227">DNA damage</keyword>
<keyword id="KW-0234">DNA repair</keyword>
<keyword id="KW-0235">DNA replication</keyword>
<keyword id="KW-0436">Ligase</keyword>
<keyword id="KW-0520">NAD</keyword>